<gene>
    <name evidence="1" type="primary">purC</name>
    <name type="ordered locus">Cpha266_1019</name>
</gene>
<feature type="chain" id="PRO_1000018686" description="Phosphoribosylaminoimidazole-succinocarboxamide synthase">
    <location>
        <begin position="1"/>
        <end position="236"/>
    </location>
</feature>
<dbReference type="EC" id="6.3.2.6" evidence="1"/>
<dbReference type="EMBL" id="CP000492">
    <property type="protein sequence ID" value="ABL65066.1"/>
    <property type="molecule type" value="Genomic_DNA"/>
</dbReference>
<dbReference type="RefSeq" id="WP_011744893.1">
    <property type="nucleotide sequence ID" value="NC_008639.1"/>
</dbReference>
<dbReference type="SMR" id="A1BF89"/>
<dbReference type="STRING" id="290317.Cpha266_1019"/>
<dbReference type="KEGG" id="cph:Cpha266_1019"/>
<dbReference type="eggNOG" id="COG0152">
    <property type="taxonomic scope" value="Bacteria"/>
</dbReference>
<dbReference type="HOGENOM" id="CLU_061495_2_0_10"/>
<dbReference type="OrthoDB" id="9801549at2"/>
<dbReference type="UniPathway" id="UPA00074">
    <property type="reaction ID" value="UER00131"/>
</dbReference>
<dbReference type="Proteomes" id="UP000008701">
    <property type="component" value="Chromosome"/>
</dbReference>
<dbReference type="GO" id="GO:0005524">
    <property type="term" value="F:ATP binding"/>
    <property type="evidence" value="ECO:0007669"/>
    <property type="project" value="UniProtKB-KW"/>
</dbReference>
<dbReference type="GO" id="GO:0004639">
    <property type="term" value="F:phosphoribosylaminoimidazolesuccinocarboxamide synthase activity"/>
    <property type="evidence" value="ECO:0007669"/>
    <property type="project" value="UniProtKB-UniRule"/>
</dbReference>
<dbReference type="GO" id="GO:0006189">
    <property type="term" value="P:'de novo' IMP biosynthetic process"/>
    <property type="evidence" value="ECO:0007669"/>
    <property type="project" value="UniProtKB-UniRule"/>
</dbReference>
<dbReference type="GO" id="GO:0009236">
    <property type="term" value="P:cobalamin biosynthetic process"/>
    <property type="evidence" value="ECO:0007669"/>
    <property type="project" value="InterPro"/>
</dbReference>
<dbReference type="CDD" id="cd01415">
    <property type="entry name" value="SAICAR_synt_PurC"/>
    <property type="match status" value="1"/>
</dbReference>
<dbReference type="FunFam" id="3.30.470.20:FF:000006">
    <property type="entry name" value="Phosphoribosylaminoimidazole-succinocarboxamide synthase"/>
    <property type="match status" value="1"/>
</dbReference>
<dbReference type="Gene3D" id="3.30.470.20">
    <property type="entry name" value="ATP-grasp fold, B domain"/>
    <property type="match status" value="1"/>
</dbReference>
<dbReference type="Gene3D" id="3.30.200.20">
    <property type="entry name" value="Phosphorylase Kinase, domain 1"/>
    <property type="match status" value="1"/>
</dbReference>
<dbReference type="HAMAP" id="MF_00137">
    <property type="entry name" value="SAICAR_synth"/>
    <property type="match status" value="1"/>
</dbReference>
<dbReference type="InterPro" id="IPR028923">
    <property type="entry name" value="SAICAR_synt/ADE2_N"/>
</dbReference>
<dbReference type="InterPro" id="IPR033934">
    <property type="entry name" value="SAICAR_synt_PurC"/>
</dbReference>
<dbReference type="InterPro" id="IPR001636">
    <property type="entry name" value="SAICAR_synth"/>
</dbReference>
<dbReference type="InterPro" id="IPR050089">
    <property type="entry name" value="SAICAR_synthetase"/>
</dbReference>
<dbReference type="InterPro" id="IPR018236">
    <property type="entry name" value="SAICAR_synthetase_CS"/>
</dbReference>
<dbReference type="NCBIfam" id="TIGR00081">
    <property type="entry name" value="purC"/>
    <property type="match status" value="1"/>
</dbReference>
<dbReference type="PANTHER" id="PTHR43599">
    <property type="entry name" value="MULTIFUNCTIONAL PROTEIN ADE2"/>
    <property type="match status" value="1"/>
</dbReference>
<dbReference type="PANTHER" id="PTHR43599:SF3">
    <property type="entry name" value="SI:DKEY-6E2.2"/>
    <property type="match status" value="1"/>
</dbReference>
<dbReference type="Pfam" id="PF01259">
    <property type="entry name" value="SAICAR_synt"/>
    <property type="match status" value="1"/>
</dbReference>
<dbReference type="SUPFAM" id="SSF56104">
    <property type="entry name" value="SAICAR synthase-like"/>
    <property type="match status" value="1"/>
</dbReference>
<dbReference type="PROSITE" id="PS01057">
    <property type="entry name" value="SAICAR_SYNTHETASE_1"/>
    <property type="match status" value="1"/>
</dbReference>
<dbReference type="PROSITE" id="PS01058">
    <property type="entry name" value="SAICAR_SYNTHETASE_2"/>
    <property type="match status" value="1"/>
</dbReference>
<protein>
    <recommendedName>
        <fullName evidence="1">Phosphoribosylaminoimidazole-succinocarboxamide synthase</fullName>
        <ecNumber evidence="1">6.3.2.6</ecNumber>
    </recommendedName>
    <alternativeName>
        <fullName evidence="1">SAICAR synthetase</fullName>
    </alternativeName>
</protein>
<organism>
    <name type="scientific">Chlorobium phaeobacteroides (strain DSM 266 / SMG 266 / 2430)</name>
    <dbReference type="NCBI Taxonomy" id="290317"/>
    <lineage>
        <taxon>Bacteria</taxon>
        <taxon>Pseudomonadati</taxon>
        <taxon>Chlorobiota</taxon>
        <taxon>Chlorobiia</taxon>
        <taxon>Chlorobiales</taxon>
        <taxon>Chlorobiaceae</taxon>
        <taxon>Chlorobium/Pelodictyon group</taxon>
        <taxon>Chlorobium</taxon>
    </lineage>
</organism>
<keyword id="KW-0067">ATP-binding</keyword>
<keyword id="KW-0436">Ligase</keyword>
<keyword id="KW-0547">Nucleotide-binding</keyword>
<keyword id="KW-0658">Purine biosynthesis</keyword>
<keyword id="KW-1185">Reference proteome</keyword>
<name>PUR7_CHLPD</name>
<sequence length="236" mass="27086">MTKTTLLHEGKAKKVFLTDQSDLVIQEFKDDATAFNNKKKGTIADKGVVNNAISCRLFTLLEEHGIRTHLVEKLSDRDMLCKRLDIIKVEVVVRNIAAGSLVKRYGFKEGFVLQEPLVEFYLKDDDLDDPLMNDFHAVALGVATSEELAILRSRAEAINLVLRQFFADRKLKLVDFKLEFGRHKNEILLGDEISPDTCRFWDLDTNEKMDKDRFRFDMGGVENAYSEVQKRVLELD</sequence>
<reference key="1">
    <citation type="submission" date="2006-12" db="EMBL/GenBank/DDBJ databases">
        <title>Complete sequence of Chlorobium phaeobacteroides DSM 266.</title>
        <authorList>
            <consortium name="US DOE Joint Genome Institute"/>
            <person name="Copeland A."/>
            <person name="Lucas S."/>
            <person name="Lapidus A."/>
            <person name="Barry K."/>
            <person name="Detter J.C."/>
            <person name="Glavina del Rio T."/>
            <person name="Hammon N."/>
            <person name="Israni S."/>
            <person name="Pitluck S."/>
            <person name="Goltsman E."/>
            <person name="Schmutz J."/>
            <person name="Larimer F."/>
            <person name="Land M."/>
            <person name="Hauser L."/>
            <person name="Mikhailova N."/>
            <person name="Li T."/>
            <person name="Overmann J."/>
            <person name="Bryant D.A."/>
            <person name="Richardson P."/>
        </authorList>
    </citation>
    <scope>NUCLEOTIDE SEQUENCE [LARGE SCALE GENOMIC DNA]</scope>
    <source>
        <strain>DSM 266 / SMG 266 / 2430</strain>
    </source>
</reference>
<evidence type="ECO:0000255" key="1">
    <source>
        <dbReference type="HAMAP-Rule" id="MF_00137"/>
    </source>
</evidence>
<accession>A1BF89</accession>
<proteinExistence type="inferred from homology"/>
<comment type="catalytic activity">
    <reaction evidence="1">
        <text>5-amino-1-(5-phospho-D-ribosyl)imidazole-4-carboxylate + L-aspartate + ATP = (2S)-2-[5-amino-1-(5-phospho-beta-D-ribosyl)imidazole-4-carboxamido]succinate + ADP + phosphate + 2 H(+)</text>
        <dbReference type="Rhea" id="RHEA:22628"/>
        <dbReference type="ChEBI" id="CHEBI:15378"/>
        <dbReference type="ChEBI" id="CHEBI:29991"/>
        <dbReference type="ChEBI" id="CHEBI:30616"/>
        <dbReference type="ChEBI" id="CHEBI:43474"/>
        <dbReference type="ChEBI" id="CHEBI:58443"/>
        <dbReference type="ChEBI" id="CHEBI:77657"/>
        <dbReference type="ChEBI" id="CHEBI:456216"/>
        <dbReference type="EC" id="6.3.2.6"/>
    </reaction>
</comment>
<comment type="pathway">
    <text evidence="1">Purine metabolism; IMP biosynthesis via de novo pathway; 5-amino-1-(5-phospho-D-ribosyl)imidazole-4-carboxamide from 5-amino-1-(5-phospho-D-ribosyl)imidazole-4-carboxylate: step 1/2.</text>
</comment>
<comment type="similarity">
    <text evidence="1">Belongs to the SAICAR synthetase family.</text>
</comment>